<evidence type="ECO:0000255" key="1">
    <source>
        <dbReference type="HAMAP-Rule" id="MF_04064"/>
    </source>
</evidence>
<evidence type="ECO:0000256" key="2">
    <source>
        <dbReference type="SAM" id="MobiDB-lite"/>
    </source>
</evidence>
<gene>
    <name evidence="1" type="primary">PB1</name>
</gene>
<comment type="function">
    <text evidence="1">Plays an important role in promoting lung pathology in both primary viral infection and secondary bacterial infection. Promotes alteration of mitochondrial morphology, dissipation of mitochondrial membrane potential, and cell death. Alternatively, inhibits the production of interferon in the infected cell at the level of host mitochondrial antiviral signaling MAVS. Its level of expression differs greatly depending on which cell type is infected, in a manner that is independent of the levels of expression of other viral proteins. Monocytic cells are more affected than epithelial cells. Seems to disable virus-infected monocytes or other host innate immune cells. During early stage of infection, predisposes the mitochondria to permeability transition through interaction with host SLC25A6/ANT3 and VDAC1. These proteins participate in the formation of the permeability transition pore complex (PTPC) responsible of the release of mitochondrial products that triggers apoptosis.</text>
</comment>
<comment type="subunit">
    <text evidence="1">Oligomer. Interacts with human SLC25A6/ANT3 and VDAC1. Interacts with host MAVS.</text>
</comment>
<comment type="subcellular location">
    <subcellularLocation>
        <location evidence="1">Host mitochondrion inner membrane</location>
    </subcellularLocation>
    <subcellularLocation>
        <location evidence="1">Host nucleus</location>
    </subcellularLocation>
    <subcellularLocation>
        <location evidence="1">Host cytoplasm</location>
        <location evidence="1">Host cytosol</location>
    </subcellularLocation>
    <text evidence="1">Inner mitochondrial membrane in most cells types. Otherwise is detected in the nucleus and cytosol.</text>
</comment>
<comment type="miscellaneous">
    <text>Is not encoded in all strains, and seems to be dispensable for replication.</text>
</comment>
<comment type="similarity">
    <text evidence="1">Belongs to the influenza viruses PB1-F2 family.</text>
</comment>
<organism>
    <name type="scientific">Influenza A virus (strain A/Teal/China/2978.1/2002 H5N1 genotype W)</name>
    <dbReference type="NCBI Taxonomy" id="284215"/>
    <lineage>
        <taxon>Viruses</taxon>
        <taxon>Riboviria</taxon>
        <taxon>Orthornavirae</taxon>
        <taxon>Negarnaviricota</taxon>
        <taxon>Polyploviricotina</taxon>
        <taxon>Insthoviricetes</taxon>
        <taxon>Articulavirales</taxon>
        <taxon>Orthomyxoviridae</taxon>
        <taxon>Alphainfluenzavirus</taxon>
        <taxon>Alphainfluenzavirus influenzae</taxon>
        <taxon>Influenza A virus</taxon>
    </lineage>
</organism>
<accession>P0C5V6</accession>
<feature type="chain" id="PRO_0000311647" description="Protein PB1-F2">
    <location>
        <begin position="1"/>
        <end position="90"/>
    </location>
</feature>
<feature type="region of interest" description="Disordered" evidence="2">
    <location>
        <begin position="1"/>
        <end position="34"/>
    </location>
</feature>
<feature type="region of interest" description="Mitochondrial targeting sequence" evidence="1">
    <location>
        <begin position="65"/>
        <end position="87"/>
    </location>
</feature>
<feature type="compositionally biased region" description="Polar residues" evidence="2">
    <location>
        <begin position="1"/>
        <end position="28"/>
    </location>
</feature>
<feature type="site" description="Low pathogenicity" evidence="1">
    <location>
        <position position="66"/>
    </location>
</feature>
<dbReference type="EMBL" id="AY651693">
    <property type="status" value="NOT_ANNOTATED_CDS"/>
    <property type="molecule type" value="Genomic_RNA"/>
</dbReference>
<dbReference type="SMR" id="P0C5V6"/>
<dbReference type="GO" id="GO:0044164">
    <property type="term" value="C:host cell cytosol"/>
    <property type="evidence" value="ECO:0007669"/>
    <property type="project" value="UniProtKB-SubCell"/>
</dbReference>
<dbReference type="GO" id="GO:0044192">
    <property type="term" value="C:host cell mitochondrial inner membrane"/>
    <property type="evidence" value="ECO:0007669"/>
    <property type="project" value="UniProtKB-SubCell"/>
</dbReference>
<dbReference type="GO" id="GO:0042025">
    <property type="term" value="C:host cell nucleus"/>
    <property type="evidence" value="ECO:0007669"/>
    <property type="project" value="UniProtKB-SubCell"/>
</dbReference>
<dbReference type="GO" id="GO:0016020">
    <property type="term" value="C:membrane"/>
    <property type="evidence" value="ECO:0007669"/>
    <property type="project" value="UniProtKB-UniRule"/>
</dbReference>
<dbReference type="GO" id="GO:0052150">
    <property type="term" value="P:symbiont-mediated perturbation of host apoptosis"/>
    <property type="evidence" value="ECO:0007669"/>
    <property type="project" value="UniProtKB-KW"/>
</dbReference>
<dbReference type="GO" id="GO:0039545">
    <property type="term" value="P:symbiont-mediated suppression of host cytoplasmic pattern recognition receptor signaling pathway via inhibition of MAVS activity"/>
    <property type="evidence" value="ECO:0007669"/>
    <property type="project" value="UniProtKB-KW"/>
</dbReference>
<dbReference type="HAMAP" id="MF_04064">
    <property type="entry name" value="INFV_PB1F2"/>
    <property type="match status" value="1"/>
</dbReference>
<dbReference type="InterPro" id="IPR021045">
    <property type="entry name" value="Flu_proapoptotic_PB1-F2"/>
</dbReference>
<dbReference type="Pfam" id="PF11986">
    <property type="entry name" value="PB1-F2"/>
    <property type="match status" value="1"/>
</dbReference>
<organismHost>
    <name type="scientific">Aves</name>
    <dbReference type="NCBI Taxonomy" id="8782"/>
</organismHost>
<organismHost>
    <name type="scientific">Felis catus</name>
    <name type="common">Cat</name>
    <name type="synonym">Felis silvestris catus</name>
    <dbReference type="NCBI Taxonomy" id="9685"/>
</organismHost>
<organismHost>
    <name type="scientific">Homo sapiens</name>
    <name type="common">Human</name>
    <dbReference type="NCBI Taxonomy" id="9606"/>
</organismHost>
<organismHost>
    <name type="scientific">Panthera pardus</name>
    <name type="common">Leopard</name>
    <name type="synonym">Felis pardus</name>
    <dbReference type="NCBI Taxonomy" id="9691"/>
</organismHost>
<organismHost>
    <name type="scientific">Panthera tigris</name>
    <name type="common">Tiger</name>
    <dbReference type="NCBI Taxonomy" id="9694"/>
</organismHost>
<organismHost>
    <name type="scientific">Sus scrofa</name>
    <name type="common">Pig</name>
    <dbReference type="NCBI Taxonomy" id="9823"/>
</organismHost>
<reference key="1">
    <citation type="journal article" date="2004" name="Nature">
        <title>Genesis of a highly pathogenic and potentially pandemic H5N1 influenza virus in eastern Asia.</title>
        <authorList>
            <person name="Li K.S."/>
            <person name="Guan Y."/>
            <person name="Wang J."/>
            <person name="Smith G.J.D."/>
            <person name="Xu K.M."/>
            <person name="Duan L."/>
            <person name="Rahardjo A.P."/>
            <person name="Puthavathana P."/>
            <person name="Buranathai C."/>
            <person name="Nguyen T.D."/>
            <person name="Estoepangestie A.T.S."/>
            <person name="Chaisingh A."/>
            <person name="Auewarakul P."/>
            <person name="Long H.T."/>
            <person name="Hanh N.T.H."/>
            <person name="Webby R.J."/>
            <person name="Poon L.L.M."/>
            <person name="Chen H."/>
            <person name="Shortridge K.F."/>
            <person name="Yuen K.Y."/>
            <person name="Webster R.G."/>
            <person name="Peiris J.S.M."/>
        </authorList>
    </citation>
    <scope>NUCLEOTIDE SEQUENCE [GENOMIC RNA]</scope>
</reference>
<name>PB1F2_I02A7</name>
<protein>
    <recommendedName>
        <fullName evidence="1">Protein PB1-F2</fullName>
    </recommendedName>
</protein>
<keyword id="KW-0053">Apoptosis</keyword>
<keyword id="KW-1035">Host cytoplasm</keyword>
<keyword id="KW-1043">Host membrane</keyword>
<keyword id="KW-1045">Host mitochondrion</keyword>
<keyword id="KW-1046">Host mitochondrion inner membrane</keyword>
<keyword id="KW-1048">Host nucleus</keyword>
<keyword id="KW-0945">Host-virus interaction</keyword>
<keyword id="KW-1090">Inhibition of host innate immune response by virus</keyword>
<keyword id="KW-1097">Inhibition of host MAVS by virus</keyword>
<keyword id="KW-1113">Inhibition of host RLR pathway by virus</keyword>
<keyword id="KW-0472">Membrane</keyword>
<keyword id="KW-1119">Modulation of host cell apoptosis by virus</keyword>
<keyword id="KW-0899">Viral immunoevasion</keyword>
<sequence>MEQGQDTPWTQSTEHTNIQKRGSGQQTQRLEHPNSTRLMDHYLRIMSPVGMHKQIVYWKQWLSLKNPTQGSLKTRVLKQWKLFNKQEWIN</sequence>
<proteinExistence type="inferred from homology"/>